<evidence type="ECO:0000250" key="1">
    <source>
        <dbReference type="UniProtKB" id="L0E2Z4"/>
    </source>
</evidence>
<evidence type="ECO:0000255" key="2"/>
<evidence type="ECO:0000256" key="3">
    <source>
        <dbReference type="SAM" id="MobiDB-lite"/>
    </source>
</evidence>
<evidence type="ECO:0000269" key="4">
    <source>
    </source>
</evidence>
<evidence type="ECO:0000303" key="5">
    <source>
    </source>
</evidence>
<evidence type="ECO:0000305" key="6"/>
<evidence type="ECO:0000305" key="7">
    <source>
    </source>
</evidence>
<organism>
    <name type="scientific">Ajellomyces capsulatus</name>
    <name type="common">Darling's disease fungus</name>
    <name type="synonym">Histoplasma capsulatum</name>
    <dbReference type="NCBI Taxonomy" id="5037"/>
    <lineage>
        <taxon>Eukaryota</taxon>
        <taxon>Fungi</taxon>
        <taxon>Dikarya</taxon>
        <taxon>Ascomycota</taxon>
        <taxon>Pezizomycotina</taxon>
        <taxon>Eurotiomycetes</taxon>
        <taxon>Eurotiomycetidae</taxon>
        <taxon>Onygenales</taxon>
        <taxon>Ajellomycetaceae</taxon>
        <taxon>Histoplasma</taxon>
    </lineage>
</organism>
<accession>B2KWH7</accession>
<dbReference type="EC" id="1.-.-.-" evidence="7"/>
<dbReference type="EMBL" id="EU253972">
    <property type="protein sequence ID" value="ACC64450.1"/>
    <property type="molecule type" value="Genomic_DNA"/>
</dbReference>
<dbReference type="SMR" id="B2KWH7"/>
<dbReference type="GO" id="GO:0005777">
    <property type="term" value="C:peroxisome"/>
    <property type="evidence" value="ECO:0007669"/>
    <property type="project" value="TreeGrafter"/>
</dbReference>
<dbReference type="GO" id="GO:0044594">
    <property type="term" value="F:17-beta-hydroxysteroid dehydrogenase (NAD+) activity"/>
    <property type="evidence" value="ECO:0007669"/>
    <property type="project" value="TreeGrafter"/>
</dbReference>
<dbReference type="GO" id="GO:0003857">
    <property type="term" value="F:3-hydroxyacyl-CoA dehydrogenase activity"/>
    <property type="evidence" value="ECO:0007669"/>
    <property type="project" value="TreeGrafter"/>
</dbReference>
<dbReference type="GO" id="GO:0004300">
    <property type="term" value="F:enoyl-CoA hydratase activity"/>
    <property type="evidence" value="ECO:0007669"/>
    <property type="project" value="TreeGrafter"/>
</dbReference>
<dbReference type="GO" id="GO:0006635">
    <property type="term" value="P:fatty acid beta-oxidation"/>
    <property type="evidence" value="ECO:0007669"/>
    <property type="project" value="TreeGrafter"/>
</dbReference>
<dbReference type="Gene3D" id="3.10.129.10">
    <property type="entry name" value="Hotdog Thioesterase"/>
    <property type="match status" value="1"/>
</dbReference>
<dbReference type="InterPro" id="IPR029069">
    <property type="entry name" value="HotDog_dom_sf"/>
</dbReference>
<dbReference type="InterPro" id="IPR002539">
    <property type="entry name" value="MaoC-like_dom"/>
</dbReference>
<dbReference type="InterPro" id="IPR054357">
    <property type="entry name" value="MFE-2_N"/>
</dbReference>
<dbReference type="PANTHER" id="PTHR13078:SF57">
    <property type="entry name" value="DEHYDRATASE, PUTATIVE (AFU_ORTHOLOGUE AFUA_5G00640)-RELATED"/>
    <property type="match status" value="1"/>
</dbReference>
<dbReference type="PANTHER" id="PTHR13078">
    <property type="entry name" value="PEROXISOMAL MULTIFUNCTIONAL ENZYME TYPE 2-RELATED"/>
    <property type="match status" value="1"/>
</dbReference>
<dbReference type="Pfam" id="PF01575">
    <property type="entry name" value="MaoC_dehydratas"/>
    <property type="match status" value="1"/>
</dbReference>
<dbReference type="Pfam" id="PF22622">
    <property type="entry name" value="MFE-2_hydrat-2_N"/>
    <property type="match status" value="1"/>
</dbReference>
<dbReference type="SUPFAM" id="SSF54637">
    <property type="entry name" value="Thioesterase/thiol ester dehydrase-isomerase"/>
    <property type="match status" value="2"/>
</dbReference>
<gene>
    <name evidence="5" type="primary">NIT22</name>
</gene>
<proteinExistence type="evidence at transcript level"/>
<reference key="1">
    <citation type="journal article" date="2008" name="PLoS Pathog.">
        <title>Histoplasma requires SID1, a member of an iron-regulated siderophore gene cluster, for host colonization.</title>
        <authorList>
            <person name="Hwang L.H."/>
            <person name="Mayfield J.A."/>
            <person name="Rine J."/>
            <person name="Sil A."/>
        </authorList>
    </citation>
    <scope>NUCLEOTIDE SEQUENCE [GENOMIC DNA]</scope>
    <scope>FUNCTION</scope>
    <scope>INDUCTION</scope>
    <source>
        <strain>ATCC 26032 / G217B</strain>
    </source>
</reference>
<sequence length="377" mass="41885">MACPCGARVLVEILTGLLSLKNQSPSTPPESEGEFTRNYILGPKYIIKAIEIFSTMPNTIPPFEYAPVKTTWLKRDVLLFAHSIGCKAGDELHFLYELHPKFQVFPTYPIVLTFKHADIDIVDFLARNAARTLPPGCPVLDWSVAVDGRRRMEFLCPLPPSSEGKTWDIHTKVLGVFDKGAGKGTVMEMEHVLKQRESGQVYTRAWESVFFKGTGGWGGERGPKMNEHVPSTPPRRPDAVSSFQSNAESAHLYRLNGDYNPLHATPEPGKSLGYGGTIMHGLFSWNITARAVLSQFGGSEGRRLRDFEAMFSSPVKPGDKLDILMWDMGLCKRATSAVRNDESLQEVRFMVKVGDRVVLSNGKALLKCEDEGVEVKL</sequence>
<keyword id="KW-0521">NADP</keyword>
<keyword id="KW-0560">Oxidoreductase</keyword>
<feature type="chain" id="PRO_0000444418" description="Probable dehydratase NIT22">
    <location>
        <begin position="1"/>
        <end position="377"/>
    </location>
</feature>
<feature type="domain" description="MaoC-like" evidence="2">
    <location>
        <begin position="233"/>
        <end position="332"/>
    </location>
</feature>
<feature type="region of interest" description="Disordered" evidence="3">
    <location>
        <begin position="220"/>
        <end position="243"/>
    </location>
</feature>
<feature type="binding site" evidence="1">
    <location>
        <position position="101"/>
    </location>
    <ligand>
        <name>NADP(+)</name>
        <dbReference type="ChEBI" id="CHEBI:58349"/>
    </ligand>
</feature>
<feature type="binding site" evidence="1">
    <location>
        <position position="196"/>
    </location>
    <ligand>
        <name>NADP(+)</name>
        <dbReference type="ChEBI" id="CHEBI:58349"/>
    </ligand>
</feature>
<feature type="binding site" evidence="1">
    <location>
        <position position="265"/>
    </location>
    <ligand>
        <name>NADP(+)</name>
        <dbReference type="ChEBI" id="CHEBI:58349"/>
    </ligand>
</feature>
<feature type="binding site" evidence="1">
    <location>
        <position position="287"/>
    </location>
    <ligand>
        <name>NADP(+)</name>
        <dbReference type="ChEBI" id="CHEBI:58349"/>
    </ligand>
</feature>
<comment type="function">
    <text evidence="4">Probable dehydratase; part of the gene cluster that mediates the biosynthesis of hydroxamate-containing siderophores that play a critical role in virulence via intracellular iron acquisition during macrophage infection (PubMed:18404210).</text>
</comment>
<comment type="pathway">
    <text evidence="7">Siderophore biosynthesis.</text>
</comment>
<comment type="induction">
    <text evidence="4">Expression is induced during iron deprivation (PubMed:18404210).</text>
</comment>
<comment type="similarity">
    <text evidence="6">Belongs to the short-chain dehydrogenases/reductases (SDR) family.</text>
</comment>
<name>NIT22_AJECA</name>
<protein>
    <recommendedName>
        <fullName evidence="5">Probable dehydratase NIT22</fullName>
        <ecNumber evidence="7">1.-.-.-</ecNumber>
    </recommendedName>
    <alternativeName>
        <fullName evidence="5">Siderophore biosynthesis cluster protein NIT22</fullName>
    </alternativeName>
</protein>